<reference key="1">
    <citation type="journal article" date="1992" name="Biosci. Biotechnol. Biochem.">
        <title>Nucleotide sequence of the subtilisin NAT gene, aprN, of Bacillus subtilis (natto).</title>
        <authorList>
            <person name="Nakamura T."/>
            <person name="Yamagata Y."/>
            <person name="Ichishima E."/>
        </authorList>
    </citation>
    <scope>NUCLEOTIDE SEQUENCE [GENOMIC DNA]</scope>
    <scope>FUNCTION AS A PROTEASE</scope>
    <scope>SUBCELLULAR LOCATION</scope>
    <source>
        <strain>NC2-1</strain>
    </source>
</reference>
<reference key="2">
    <citation type="journal article" date="1993" name="Biochem. Biophys. Res. Commun.">
        <title>Purification and characterization of a strong fibrinolytic enzyme (nattokinase) in the vegetable cheese natto, a popular soybean fermented food in Japan.</title>
        <authorList>
            <person name="Fujita M."/>
            <person name="Nomura K."/>
            <person name="Hong K."/>
            <person name="Ito Y."/>
            <person name="Asada A."/>
            <person name="Nishimuro S."/>
        </authorList>
    </citation>
    <scope>PROTEIN SEQUENCE OF 107-381</scope>
    <scope>FUNCTION</scope>
    <scope>CATALYTIC ACTIVITY</scope>
    <scope>ACTIVE SITE</scope>
    <scope>BIOPHYSICOCHEMICAL PROPERTIES</scope>
</reference>
<reference key="3">
    <citation type="journal article" date="2010" name="Acta Crystallogr. F">
        <title>Purification, crystallization and preliminary X-ray diffraction experiment of nattokinase from Bacillus subtilis natto.</title>
        <authorList>
            <person name="Yanagisawa Y."/>
            <person name="Chatake T."/>
            <person name="Chiba-Kamoshida K."/>
            <person name="Naito S."/>
            <person name="Ohsugi T."/>
            <person name="Sumi H."/>
            <person name="Yasuda I."/>
            <person name="Morimoto Y."/>
        </authorList>
    </citation>
    <scope>PRELIMINARY CRYSTALLOGRAPHY</scope>
    <scope>FUNCTION</scope>
</reference>
<reference evidence="13" key="4">
    <citation type="journal article" date="2013" name="J. Synchrotron Radiat.">
        <title>X-ray structure determination and deuteration of nattokinase.</title>
        <authorList>
            <person name="Yanagisawa Y."/>
            <person name="Chatake T."/>
            <person name="Naito S."/>
            <person name="Ohsugi T."/>
            <person name="Yatagai C."/>
            <person name="Sumi H."/>
            <person name="Kawaguchi A."/>
            <person name="Chiba-Kamosida K."/>
            <person name="Ogawa M."/>
            <person name="Adachi T."/>
            <person name="Morimoto Y."/>
        </authorList>
    </citation>
    <scope>X-RAY CRYSTALLOGRAPHY (1.74 ANGSTROMS) OF 107-381 IN COMPLEX WITH CA(2+)</scope>
    <scope>PROBABLE ACTIVE SITE</scope>
</reference>
<reference evidence="14" key="5">
    <citation type="submission" date="2012-10" db="PDB data bank">
        <title>Crystal structure of subtilisin NAT at 1.36.</title>
        <authorList>
            <person name="Watanabe K."/>
        </authorList>
    </citation>
    <scope>X-RAY CRYSTALLOGRAPHY (1.36 ANGSTROMS) OF 107-381 IN COMPLEX WITH CA(2+)</scope>
</reference>
<reference evidence="16" key="6">
    <citation type="submission" date="2016-07" db="PDB data bank">
        <title>unpublished.</title>
        <authorList>
            <person name="Ren Y."/>
            <person name="Pan X."/>
            <person name="Lyu Q."/>
            <person name="Liu W."/>
        </authorList>
    </citation>
    <scope>X-RAY CRYSTALLOGRAPHY (1.80 ANGSTROMS) OF 107-381 IN COMPLEX WITH CA(2+)</scope>
</reference>
<evidence type="ECO:0000250" key="1"/>
<evidence type="ECO:0000255" key="2"/>
<evidence type="ECO:0000255" key="3">
    <source>
        <dbReference type="PROSITE-ProRule" id="PRU01240"/>
    </source>
</evidence>
<evidence type="ECO:0000269" key="4">
    <source>
    </source>
</evidence>
<evidence type="ECO:0000269" key="5">
    <source>
    </source>
</evidence>
<evidence type="ECO:0000269" key="6">
    <source>
    </source>
</evidence>
<evidence type="ECO:0000303" key="7">
    <source>
    </source>
</evidence>
<evidence type="ECO:0000303" key="8">
    <source>
    </source>
</evidence>
<evidence type="ECO:0000303" key="9">
    <source>
    </source>
</evidence>
<evidence type="ECO:0000305" key="10"/>
<evidence type="ECO:0000305" key="11">
    <source>
    </source>
</evidence>
<evidence type="ECO:0000305" key="12">
    <source>
    </source>
</evidence>
<evidence type="ECO:0000312" key="13">
    <source>
        <dbReference type="PDB" id="4DWW"/>
    </source>
</evidence>
<evidence type="ECO:0007744" key="14">
    <source>
        <dbReference type="PDB" id="3VYV"/>
    </source>
</evidence>
<evidence type="ECO:0007744" key="15">
    <source>
        <dbReference type="PDB" id="4DWW"/>
    </source>
</evidence>
<evidence type="ECO:0007744" key="16">
    <source>
        <dbReference type="PDB" id="5GL8"/>
    </source>
</evidence>
<evidence type="ECO:0007829" key="17">
    <source>
        <dbReference type="PDB" id="3VYV"/>
    </source>
</evidence>
<protein>
    <recommendedName>
        <fullName evidence="7">Subtilisin NAT</fullName>
        <ecNumber evidence="6">3.4.21.62</ecNumber>
    </recommendedName>
    <alternativeName>
        <fullName evidence="9">Nattokinase</fullName>
        <shortName evidence="8">NK</shortName>
    </alternativeName>
</protein>
<proteinExistence type="evidence at protein level"/>
<organism>
    <name type="scientific">Bacillus subtilis subsp. natto</name>
    <dbReference type="NCBI Taxonomy" id="86029"/>
    <lineage>
        <taxon>Bacteria</taxon>
        <taxon>Bacillati</taxon>
        <taxon>Bacillota</taxon>
        <taxon>Bacilli</taxon>
        <taxon>Bacillales</taxon>
        <taxon>Bacillaceae</taxon>
        <taxon>Bacillus</taxon>
    </lineage>
</organism>
<name>SUBN_BACNA</name>
<feature type="signal peptide" evidence="1">
    <location>
        <begin position="1"/>
        <end position="29"/>
    </location>
</feature>
<feature type="propeptide" id="PRO_0000027175" evidence="5 6">
    <location>
        <begin position="30"/>
        <end position="106"/>
    </location>
</feature>
<feature type="chain" id="PRO_0000027176" description="Subtilisin NAT">
    <location>
        <begin position="107"/>
        <end position="381"/>
    </location>
</feature>
<feature type="domain" description="Inhibitor I9" evidence="2">
    <location>
        <begin position="38"/>
        <end position="103"/>
    </location>
</feature>
<feature type="domain" description="Peptidase S8" evidence="3">
    <location>
        <begin position="111"/>
        <end position="380"/>
    </location>
</feature>
<feature type="active site" description="Charge relay system" evidence="3">
    <location>
        <position position="138"/>
    </location>
</feature>
<feature type="active site" description="Charge relay system" evidence="3">
    <location>
        <position position="170"/>
    </location>
</feature>
<feature type="active site" description="Charge relay system" evidence="3 12">
    <location>
        <position position="327"/>
    </location>
</feature>
<feature type="binding site" evidence="14 15 16">
    <location>
        <position position="147"/>
    </location>
    <ligand>
        <name>Ca(2+)</name>
        <dbReference type="ChEBI" id="CHEBI:29108"/>
        <label>1</label>
    </ligand>
</feature>
<feature type="binding site" evidence="14 15 16">
    <location>
        <position position="181"/>
    </location>
    <ligand>
        <name>Ca(2+)</name>
        <dbReference type="ChEBI" id="CHEBI:29108"/>
        <label>1</label>
    </ligand>
</feature>
<feature type="binding site" evidence="14 15 16">
    <location>
        <position position="183"/>
    </location>
    <ligand>
        <name>Ca(2+)</name>
        <dbReference type="ChEBI" id="CHEBI:29108"/>
        <label>1</label>
    </ligand>
</feature>
<feature type="binding site" evidence="14 15 16">
    <location>
        <position position="185"/>
    </location>
    <ligand>
        <name>Ca(2+)</name>
        <dbReference type="ChEBI" id="CHEBI:29108"/>
        <label>1</label>
    </ligand>
</feature>
<feature type="binding site" evidence="14 15 16">
    <location>
        <position position="187"/>
    </location>
    <ligand>
        <name>Ca(2+)</name>
        <dbReference type="ChEBI" id="CHEBI:29108"/>
        <label>1</label>
    </ligand>
</feature>
<feature type="binding site" evidence="14 15 16">
    <location>
        <position position="275"/>
    </location>
    <ligand>
        <name>Ca(2+)</name>
        <dbReference type="ChEBI" id="CHEBI:29108"/>
        <label>2</label>
    </ligand>
</feature>
<feature type="binding site" evidence="15 16">
    <location>
        <position position="277"/>
    </location>
    <ligand>
        <name>Ca(2+)</name>
        <dbReference type="ChEBI" id="CHEBI:29108"/>
        <label>2</label>
    </ligand>
</feature>
<feature type="binding site" evidence="14 15 16">
    <location>
        <position position="280"/>
    </location>
    <ligand>
        <name>Ca(2+)</name>
        <dbReference type="ChEBI" id="CHEBI:29108"/>
        <label>2</label>
    </ligand>
</feature>
<feature type="binding site" evidence="14 15 16">
    <location>
        <position position="303"/>
    </location>
    <ligand>
        <name>Ca(2+)</name>
        <dbReference type="ChEBI" id="CHEBI:29108"/>
        <label>2</label>
    </ligand>
</feature>
<feature type="helix" evidence="17">
    <location>
        <begin position="112"/>
        <end position="116"/>
    </location>
</feature>
<feature type="helix" evidence="17">
    <location>
        <begin position="119"/>
        <end position="125"/>
    </location>
</feature>
<feature type="strand" evidence="17">
    <location>
        <begin position="133"/>
        <end position="139"/>
    </location>
</feature>
<feature type="strand" evidence="17">
    <location>
        <begin position="150"/>
        <end position="155"/>
    </location>
</feature>
<feature type="strand" evidence="17">
    <location>
        <begin position="167"/>
        <end position="169"/>
    </location>
</feature>
<feature type="helix" evidence="17">
    <location>
        <begin position="170"/>
        <end position="179"/>
    </location>
</feature>
<feature type="strand" evidence="17">
    <location>
        <begin position="182"/>
        <end position="186"/>
    </location>
</feature>
<feature type="strand" evidence="17">
    <location>
        <begin position="195"/>
        <end position="200"/>
    </location>
</feature>
<feature type="helix" evidence="17">
    <location>
        <begin position="210"/>
        <end position="222"/>
    </location>
</feature>
<feature type="strand" evidence="17">
    <location>
        <begin position="226"/>
        <end position="230"/>
    </location>
</feature>
<feature type="helix" evidence="17">
    <location>
        <begin position="239"/>
        <end position="250"/>
    </location>
</feature>
<feature type="strand" evidence="17">
    <location>
        <begin position="254"/>
        <end position="258"/>
    </location>
</feature>
<feature type="turn" evidence="17">
    <location>
        <begin position="274"/>
        <end position="276"/>
    </location>
</feature>
<feature type="strand" evidence="17">
    <location>
        <begin position="280"/>
        <end position="286"/>
    </location>
</feature>
<feature type="strand" evidence="17">
    <location>
        <begin position="304"/>
        <end position="307"/>
    </location>
</feature>
<feature type="strand" evidence="17">
    <location>
        <begin position="309"/>
        <end position="315"/>
    </location>
</feature>
<feature type="turn" evidence="17">
    <location>
        <begin position="316"/>
        <end position="318"/>
    </location>
</feature>
<feature type="strand" evidence="17">
    <location>
        <begin position="319"/>
        <end position="323"/>
    </location>
</feature>
<feature type="helix" evidence="17">
    <location>
        <begin position="326"/>
        <end position="343"/>
    </location>
</feature>
<feature type="helix" evidence="17">
    <location>
        <begin position="349"/>
        <end position="358"/>
    </location>
</feature>
<feature type="helix" evidence="17">
    <location>
        <begin position="366"/>
        <end position="369"/>
    </location>
</feature>
<feature type="helix" evidence="17">
    <location>
        <begin position="376"/>
        <end position="379"/>
    </location>
</feature>
<dbReference type="EC" id="3.4.21.62" evidence="6"/>
<dbReference type="EMBL" id="D25319">
    <property type="protein sequence ID" value="BAA04989.1"/>
    <property type="molecule type" value="Genomic_DNA"/>
</dbReference>
<dbReference type="EMBL" id="S51909">
    <property type="protein sequence ID" value="AAC60424.1"/>
    <property type="molecule type" value="Genomic_DNA"/>
</dbReference>
<dbReference type="PIR" id="JH0778">
    <property type="entry name" value="JH0778"/>
</dbReference>
<dbReference type="PDB" id="3VYV">
    <property type="method" value="X-ray"/>
    <property type="resolution" value="1.36 A"/>
    <property type="chains" value="A/B=107-381"/>
</dbReference>
<dbReference type="PDB" id="4DWW">
    <property type="method" value="X-ray"/>
    <property type="resolution" value="1.74 A"/>
    <property type="chains" value="A=107-381"/>
</dbReference>
<dbReference type="PDB" id="5GL8">
    <property type="method" value="X-ray"/>
    <property type="resolution" value="1.80 A"/>
    <property type="chains" value="A/B=107-381"/>
</dbReference>
<dbReference type="PDBsum" id="3VYV"/>
<dbReference type="PDBsum" id="4DWW"/>
<dbReference type="PDBsum" id="5GL8"/>
<dbReference type="BMRB" id="P35835"/>
<dbReference type="SMR" id="P35835"/>
<dbReference type="MEROPS" id="I09.001"/>
<dbReference type="MEROPS" id="S08.044"/>
<dbReference type="SABIO-RK" id="P35835"/>
<dbReference type="EvolutionaryTrace" id="P35835"/>
<dbReference type="GO" id="GO:0005576">
    <property type="term" value="C:extracellular region"/>
    <property type="evidence" value="ECO:0007669"/>
    <property type="project" value="UniProtKB-SubCell"/>
</dbReference>
<dbReference type="GO" id="GO:0046872">
    <property type="term" value="F:metal ion binding"/>
    <property type="evidence" value="ECO:0007669"/>
    <property type="project" value="UniProtKB-KW"/>
</dbReference>
<dbReference type="GO" id="GO:0004252">
    <property type="term" value="F:serine-type endopeptidase activity"/>
    <property type="evidence" value="ECO:0007669"/>
    <property type="project" value="UniProtKB-EC"/>
</dbReference>
<dbReference type="GO" id="GO:0006508">
    <property type="term" value="P:proteolysis"/>
    <property type="evidence" value="ECO:0007669"/>
    <property type="project" value="UniProtKB-KW"/>
</dbReference>
<dbReference type="GO" id="GO:0030435">
    <property type="term" value="P:sporulation resulting in formation of a cellular spore"/>
    <property type="evidence" value="ECO:0007669"/>
    <property type="project" value="UniProtKB-KW"/>
</dbReference>
<dbReference type="CDD" id="cd07477">
    <property type="entry name" value="Peptidases_S8_Subtilisin_subset"/>
    <property type="match status" value="1"/>
</dbReference>
<dbReference type="FunFam" id="3.40.50.200:FF:000055">
    <property type="entry name" value="Tk-subtilisin"/>
    <property type="match status" value="1"/>
</dbReference>
<dbReference type="Gene3D" id="3.30.70.80">
    <property type="entry name" value="Peptidase S8 propeptide/proteinase inhibitor I9"/>
    <property type="match status" value="1"/>
</dbReference>
<dbReference type="Gene3D" id="3.40.50.200">
    <property type="entry name" value="Peptidase S8/S53 domain"/>
    <property type="match status" value="1"/>
</dbReference>
<dbReference type="InterPro" id="IPR000209">
    <property type="entry name" value="Peptidase_S8/S53_dom"/>
</dbReference>
<dbReference type="InterPro" id="IPR036852">
    <property type="entry name" value="Peptidase_S8/S53_dom_sf"/>
</dbReference>
<dbReference type="InterPro" id="IPR023827">
    <property type="entry name" value="Peptidase_S8_Asp-AS"/>
</dbReference>
<dbReference type="InterPro" id="IPR022398">
    <property type="entry name" value="Peptidase_S8_His-AS"/>
</dbReference>
<dbReference type="InterPro" id="IPR023828">
    <property type="entry name" value="Peptidase_S8_Ser-AS"/>
</dbReference>
<dbReference type="InterPro" id="IPR050131">
    <property type="entry name" value="Peptidase_S8_subtilisin-like"/>
</dbReference>
<dbReference type="InterPro" id="IPR015500">
    <property type="entry name" value="Peptidase_S8_subtilisin-rel"/>
</dbReference>
<dbReference type="InterPro" id="IPR010259">
    <property type="entry name" value="S8pro/Inhibitor_I9"/>
</dbReference>
<dbReference type="InterPro" id="IPR037045">
    <property type="entry name" value="S8pro/Inhibitor_I9_sf"/>
</dbReference>
<dbReference type="InterPro" id="IPR034202">
    <property type="entry name" value="Subtilisin_Carlsberg-like"/>
</dbReference>
<dbReference type="PANTHER" id="PTHR43806:SF11">
    <property type="entry name" value="CEREVISIN-RELATED"/>
    <property type="match status" value="1"/>
</dbReference>
<dbReference type="PANTHER" id="PTHR43806">
    <property type="entry name" value="PEPTIDASE S8"/>
    <property type="match status" value="1"/>
</dbReference>
<dbReference type="Pfam" id="PF05922">
    <property type="entry name" value="Inhibitor_I9"/>
    <property type="match status" value="1"/>
</dbReference>
<dbReference type="Pfam" id="PF00082">
    <property type="entry name" value="Peptidase_S8"/>
    <property type="match status" value="1"/>
</dbReference>
<dbReference type="PRINTS" id="PR00723">
    <property type="entry name" value="SUBTILISIN"/>
</dbReference>
<dbReference type="SUPFAM" id="SSF54897">
    <property type="entry name" value="Protease propeptides/inhibitors"/>
    <property type="match status" value="1"/>
</dbReference>
<dbReference type="SUPFAM" id="SSF52743">
    <property type="entry name" value="Subtilisin-like"/>
    <property type="match status" value="1"/>
</dbReference>
<dbReference type="PROSITE" id="PS51892">
    <property type="entry name" value="SUBTILASE"/>
    <property type="match status" value="1"/>
</dbReference>
<dbReference type="PROSITE" id="PS00136">
    <property type="entry name" value="SUBTILASE_ASP"/>
    <property type="match status" value="1"/>
</dbReference>
<dbReference type="PROSITE" id="PS00137">
    <property type="entry name" value="SUBTILASE_HIS"/>
    <property type="match status" value="1"/>
</dbReference>
<dbReference type="PROSITE" id="PS00138">
    <property type="entry name" value="SUBTILASE_SER"/>
    <property type="match status" value="1"/>
</dbReference>
<comment type="function">
    <text evidence="4 6">Subtilisin is an extracellular alkaline serine protease, it catalyzes the hydrolysis of proteins and peptide amides (PubMed:1369081). Subtilisin NAT also has fibrinolytic activity (PubMed:21139221, PubMed:8280151).</text>
</comment>
<comment type="catalytic activity">
    <reaction evidence="6">
        <text>Hydrolysis of proteins with broad specificity for peptide bonds, and a preference for a large uncharged residue in P1. Hydrolyzes peptide amides.</text>
        <dbReference type="EC" id="3.4.21.62"/>
    </reaction>
</comment>
<comment type="cofactor">
    <cofactor evidence="5">
        <name>Ca(2+)</name>
        <dbReference type="ChEBI" id="CHEBI:29108"/>
    </cofactor>
    <text evidence="14 15 16">Binds 2 calcium ions per subunit.</text>
</comment>
<comment type="activity regulation">
    <text evidence="6">Inhibited by PMSF (phenylmethylsulfonyl fluoride) (PubMed:8280151).</text>
</comment>
<comment type="biophysicochemical properties">
    <kinetics>
        <KM evidence="6">0.48 mM for Suc-Ala-Ala-Pro-Phe-pNA</KM>
    </kinetics>
    <phDependence>
        <text evidence="6">Optimum pH is 6-12 (PubMed:8280151).</text>
    </phDependence>
    <temperatureDependence>
        <text evidence="6">Optimum temperature is 37-40 degrees Celsius, loses activity at 50 degrees Celsius (PubMed:8280151).</text>
    </temperatureDependence>
</comment>
<comment type="subunit">
    <text evidence="11">Monomer.</text>
</comment>
<comment type="subcellular location">
    <subcellularLocation>
        <location evidence="4">Secreted</location>
    </subcellularLocation>
</comment>
<comment type="miscellaneous">
    <text>Secretion of subtilisin is associated with onset of sporulation, and many mutations which block sporulation at early stages affect expression levels of subtilisin. However, subtilisin is not necessary for normal sporulation.</text>
</comment>
<comment type="miscellaneous">
    <text evidence="11 12">In Japan this enzyme, isolated from a process of fermentation involving boiled soybeans and Bacillus natto, is used as a food supplement because it is reported to reduce and prevent blood clotting.</text>
</comment>
<comment type="similarity">
    <text evidence="10">Belongs to the peptidase S8 family.</text>
</comment>
<keyword id="KW-0002">3D-structure</keyword>
<keyword id="KW-0106">Calcium</keyword>
<keyword id="KW-0903">Direct protein sequencing</keyword>
<keyword id="KW-0378">Hydrolase</keyword>
<keyword id="KW-0479">Metal-binding</keyword>
<keyword id="KW-0645">Protease</keyword>
<keyword id="KW-0964">Secreted</keyword>
<keyword id="KW-0720">Serine protease</keyword>
<keyword id="KW-0732">Signal</keyword>
<keyword id="KW-0749">Sporulation</keyword>
<keyword id="KW-0865">Zymogen</keyword>
<accession>P35835</accession>
<sequence length="381" mass="39507">MRSKKLWISLLFALTLIFTMAFSNMSAQAAGKSSTEKKYIVGFKQTMSAMSSAKKKDVISEKGGKVQKQFKYVNAAAATLDEKAVKELKKDPSVAYVEEDHIAHEYAQSVPYGISQIKAPALHSQGYTGSNVKVAVIDSGIDSSHPDLNVRGGASFVPSETNPYQDGSSHGTHVAGTIAALNNSIGVLGVAPSASLYAVKVLDSTGSGQYSWIINGIEWAISNNMDVINMSLGGPTGSTALKTVVDKAVSSGIVVAAAAGNEGSSGSTSTVGYPAKYPSTIAVGAVNSSNQRASFSSVGSELDVMAPGVSIQSTLPGGTYGAYNGTSMATPHVAGAAALILSKHPTWTNAQVRDRLESTATYLGNSFYYGKGLINVQAAAQ</sequence>
<gene>
    <name evidence="7" type="primary">aprN</name>
</gene>